<accession>Q58022</accession>
<gene>
    <name type="ordered locus">MJ0605</name>
</gene>
<organism>
    <name type="scientific">Methanocaldococcus jannaschii (strain ATCC 43067 / DSM 2661 / JAL-1 / JCM 10045 / NBRC 100440)</name>
    <name type="common">Methanococcus jannaschii</name>
    <dbReference type="NCBI Taxonomy" id="243232"/>
    <lineage>
        <taxon>Archaea</taxon>
        <taxon>Methanobacteriati</taxon>
        <taxon>Methanobacteriota</taxon>
        <taxon>Methanomada group</taxon>
        <taxon>Methanococci</taxon>
        <taxon>Methanococcales</taxon>
        <taxon>Methanocaldococcaceae</taxon>
        <taxon>Methanocaldococcus</taxon>
    </lineage>
</organism>
<feature type="chain" id="PRO_0000159640" description="Putative toxin MJ0605">
    <location>
        <begin position="1"/>
        <end position="134"/>
    </location>
</feature>
<name>Y605_METJA</name>
<dbReference type="EMBL" id="L77117">
    <property type="protein sequence ID" value="AAB98599.1"/>
    <property type="molecule type" value="Genomic_DNA"/>
</dbReference>
<dbReference type="PIR" id="E64375">
    <property type="entry name" value="E64375"/>
</dbReference>
<dbReference type="RefSeq" id="WP_010870109.1">
    <property type="nucleotide sequence ID" value="NC_000909.1"/>
</dbReference>
<dbReference type="SMR" id="Q58022"/>
<dbReference type="STRING" id="243232.MJ_0605"/>
<dbReference type="PaxDb" id="243232-MJ_0605"/>
<dbReference type="EnsemblBacteria" id="AAB98599">
    <property type="protein sequence ID" value="AAB98599"/>
    <property type="gene ID" value="MJ_0605"/>
</dbReference>
<dbReference type="GeneID" id="1451470"/>
<dbReference type="KEGG" id="mja:MJ_0605"/>
<dbReference type="eggNOG" id="arCOG02123">
    <property type="taxonomic scope" value="Archaea"/>
</dbReference>
<dbReference type="HOGENOM" id="CLU_151247_1_0_2"/>
<dbReference type="InParanoid" id="Q58022"/>
<dbReference type="OrthoDB" id="101012at2157"/>
<dbReference type="PhylomeDB" id="Q58022"/>
<dbReference type="Proteomes" id="UP000000805">
    <property type="component" value="Chromosome"/>
</dbReference>
<dbReference type="Gene3D" id="1.20.120.330">
    <property type="entry name" value="Nucleotidyltransferases domain 2"/>
    <property type="match status" value="1"/>
</dbReference>
<dbReference type="InterPro" id="IPR007842">
    <property type="entry name" value="HEPN_dom"/>
</dbReference>
<dbReference type="InterPro" id="IPR052226">
    <property type="entry name" value="UPF0332_toxin"/>
</dbReference>
<dbReference type="PANTHER" id="PTHR36565:SF5">
    <property type="entry name" value="TOXIN MJ0605-RELATED"/>
    <property type="match status" value="1"/>
</dbReference>
<dbReference type="PANTHER" id="PTHR36565">
    <property type="entry name" value="UPF0332 PROTEIN TM_1000"/>
    <property type="match status" value="1"/>
</dbReference>
<dbReference type="Pfam" id="PF05168">
    <property type="entry name" value="HEPN"/>
    <property type="match status" value="1"/>
</dbReference>
<dbReference type="SUPFAM" id="SSF81593">
    <property type="entry name" value="Nucleotidyltransferase substrate binding subunit/domain"/>
    <property type="match status" value="1"/>
</dbReference>
<keyword id="KW-1185">Reference proteome</keyword>
<keyword id="KW-1277">Toxin-antitoxin system</keyword>
<protein>
    <recommendedName>
        <fullName>Putative toxin MJ0605</fullName>
    </recommendedName>
    <alternativeName>
        <fullName>UPF0332 protein MJ0605</fullName>
    </alternativeName>
</protein>
<comment type="function">
    <text evidence="1">Putative toxin component of a putative type VII toxin-antitoxin (TA) system. Its cognate antitoxin might be MJ0604.</text>
</comment>
<comment type="similarity">
    <text evidence="1">Belongs to the UPF0332 family.</text>
</comment>
<evidence type="ECO:0000305" key="1"/>
<proteinExistence type="inferred from homology"/>
<reference key="1">
    <citation type="journal article" date="1996" name="Science">
        <title>Complete genome sequence of the methanogenic archaeon, Methanococcus jannaschii.</title>
        <authorList>
            <person name="Bult C.J."/>
            <person name="White O."/>
            <person name="Olsen G.J."/>
            <person name="Zhou L."/>
            <person name="Fleischmann R.D."/>
            <person name="Sutton G.G."/>
            <person name="Blake J.A."/>
            <person name="FitzGerald L.M."/>
            <person name="Clayton R.A."/>
            <person name="Gocayne J.D."/>
            <person name="Kerlavage A.R."/>
            <person name="Dougherty B.A."/>
            <person name="Tomb J.-F."/>
            <person name="Adams M.D."/>
            <person name="Reich C.I."/>
            <person name="Overbeek R."/>
            <person name="Kirkness E.F."/>
            <person name="Weinstock K.G."/>
            <person name="Merrick J.M."/>
            <person name="Glodek A."/>
            <person name="Scott J.L."/>
            <person name="Geoghagen N.S.M."/>
            <person name="Weidman J.F."/>
            <person name="Fuhrmann J.L."/>
            <person name="Nguyen D."/>
            <person name="Utterback T.R."/>
            <person name="Kelley J.M."/>
            <person name="Peterson J.D."/>
            <person name="Sadow P.W."/>
            <person name="Hanna M.C."/>
            <person name="Cotton M.D."/>
            <person name="Roberts K.M."/>
            <person name="Hurst M.A."/>
            <person name="Kaine B.P."/>
            <person name="Borodovsky M."/>
            <person name="Klenk H.-P."/>
            <person name="Fraser C.M."/>
            <person name="Smith H.O."/>
            <person name="Woese C.R."/>
            <person name="Venter J.C."/>
        </authorList>
    </citation>
    <scope>NUCLEOTIDE SEQUENCE [LARGE SCALE GENOMIC DNA]</scope>
    <source>
        <strain>ATCC 43067 / DSM 2661 / JAL-1 / JCM 10045 / NBRC 100440</strain>
    </source>
</reference>
<sequence length="134" mass="15596">MKALLNKDIREEIQALIEIAEENLSAAKILFENKLYRDAVARAYYAIFHSAKALLLTKNLNPKKHAGVIKMFGLYFVNEGYIEEIYGRIITKSYNLRWKADYTTDKPTEEEAESIIYEAEMFVDRIKKALKEIL</sequence>